<proteinExistence type="inferred from homology"/>
<comment type="catalytic activity">
    <reaction evidence="1">
        <text>(6R)-10-formyltetrahydrofolate + 5-amino-1-(5-phospho-beta-D-ribosyl)imidazole-4-carboxamide = 5-formamido-1-(5-phospho-D-ribosyl)imidazole-4-carboxamide + (6S)-5,6,7,8-tetrahydrofolate</text>
        <dbReference type="Rhea" id="RHEA:22192"/>
        <dbReference type="ChEBI" id="CHEBI:57453"/>
        <dbReference type="ChEBI" id="CHEBI:58467"/>
        <dbReference type="ChEBI" id="CHEBI:58475"/>
        <dbReference type="ChEBI" id="CHEBI:195366"/>
        <dbReference type="EC" id="2.1.2.3"/>
    </reaction>
</comment>
<comment type="catalytic activity">
    <reaction evidence="1">
        <text>IMP + H2O = 5-formamido-1-(5-phospho-D-ribosyl)imidazole-4-carboxamide</text>
        <dbReference type="Rhea" id="RHEA:18445"/>
        <dbReference type="ChEBI" id="CHEBI:15377"/>
        <dbReference type="ChEBI" id="CHEBI:58053"/>
        <dbReference type="ChEBI" id="CHEBI:58467"/>
        <dbReference type="EC" id="3.5.4.10"/>
    </reaction>
</comment>
<comment type="pathway">
    <text evidence="1">Purine metabolism; IMP biosynthesis via de novo pathway; 5-formamido-1-(5-phospho-D-ribosyl)imidazole-4-carboxamide from 5-amino-1-(5-phospho-D-ribosyl)imidazole-4-carboxamide (10-formyl THF route): step 1/1.</text>
</comment>
<comment type="pathway">
    <text evidence="1">Purine metabolism; IMP biosynthesis via de novo pathway; IMP from 5-formamido-1-(5-phospho-D-ribosyl)imidazole-4-carboxamide: step 1/1.</text>
</comment>
<comment type="domain">
    <text evidence="1">The IMP cyclohydrolase activity resides in the N-terminal region.</text>
</comment>
<comment type="similarity">
    <text evidence="1">Belongs to the PurH family.</text>
</comment>
<evidence type="ECO:0000255" key="1">
    <source>
        <dbReference type="HAMAP-Rule" id="MF_00139"/>
    </source>
</evidence>
<evidence type="ECO:0000255" key="2">
    <source>
        <dbReference type="PROSITE-ProRule" id="PRU01202"/>
    </source>
</evidence>
<dbReference type="EC" id="2.1.2.3" evidence="1"/>
<dbReference type="EC" id="3.5.4.10" evidence="1"/>
<dbReference type="EMBL" id="CP001015">
    <property type="protein sequence ID" value="ACF55031.1"/>
    <property type="molecule type" value="Genomic_DNA"/>
</dbReference>
<dbReference type="SMR" id="B5E5J9"/>
<dbReference type="KEGG" id="spx:SPG_0056"/>
<dbReference type="HOGENOM" id="CLU_016316_5_2_9"/>
<dbReference type="UniPathway" id="UPA00074">
    <property type="reaction ID" value="UER00133"/>
</dbReference>
<dbReference type="UniPathway" id="UPA00074">
    <property type="reaction ID" value="UER00135"/>
</dbReference>
<dbReference type="GO" id="GO:0005829">
    <property type="term" value="C:cytosol"/>
    <property type="evidence" value="ECO:0007669"/>
    <property type="project" value="TreeGrafter"/>
</dbReference>
<dbReference type="GO" id="GO:0003937">
    <property type="term" value="F:IMP cyclohydrolase activity"/>
    <property type="evidence" value="ECO:0007669"/>
    <property type="project" value="UniProtKB-UniRule"/>
</dbReference>
<dbReference type="GO" id="GO:0004643">
    <property type="term" value="F:phosphoribosylaminoimidazolecarboxamide formyltransferase activity"/>
    <property type="evidence" value="ECO:0007669"/>
    <property type="project" value="UniProtKB-UniRule"/>
</dbReference>
<dbReference type="GO" id="GO:0006189">
    <property type="term" value="P:'de novo' IMP biosynthetic process"/>
    <property type="evidence" value="ECO:0007669"/>
    <property type="project" value="UniProtKB-UniRule"/>
</dbReference>
<dbReference type="CDD" id="cd01421">
    <property type="entry name" value="IMPCH"/>
    <property type="match status" value="1"/>
</dbReference>
<dbReference type="FunFam" id="3.40.140.20:FF:000001">
    <property type="entry name" value="Bifunctional purine biosynthesis protein PurH"/>
    <property type="match status" value="1"/>
</dbReference>
<dbReference type="FunFam" id="3.40.140.20:FF:000002">
    <property type="entry name" value="Bifunctional purine biosynthesis protein PurH"/>
    <property type="match status" value="1"/>
</dbReference>
<dbReference type="FunFam" id="3.40.50.1380:FF:000001">
    <property type="entry name" value="Bifunctional purine biosynthesis protein PurH"/>
    <property type="match status" value="1"/>
</dbReference>
<dbReference type="Gene3D" id="3.40.140.20">
    <property type="match status" value="2"/>
</dbReference>
<dbReference type="Gene3D" id="3.40.50.1380">
    <property type="entry name" value="Methylglyoxal synthase-like domain"/>
    <property type="match status" value="1"/>
</dbReference>
<dbReference type="HAMAP" id="MF_00139">
    <property type="entry name" value="PurH"/>
    <property type="match status" value="1"/>
</dbReference>
<dbReference type="InterPro" id="IPR024051">
    <property type="entry name" value="AICAR_Tfase_dup_dom_sf"/>
</dbReference>
<dbReference type="InterPro" id="IPR016193">
    <property type="entry name" value="Cytidine_deaminase-like"/>
</dbReference>
<dbReference type="InterPro" id="IPR011607">
    <property type="entry name" value="MGS-like_dom"/>
</dbReference>
<dbReference type="InterPro" id="IPR036914">
    <property type="entry name" value="MGS-like_dom_sf"/>
</dbReference>
<dbReference type="InterPro" id="IPR002695">
    <property type="entry name" value="PurH-like"/>
</dbReference>
<dbReference type="NCBIfam" id="NF002049">
    <property type="entry name" value="PRK00881.1"/>
    <property type="match status" value="1"/>
</dbReference>
<dbReference type="NCBIfam" id="TIGR00355">
    <property type="entry name" value="purH"/>
    <property type="match status" value="1"/>
</dbReference>
<dbReference type="PANTHER" id="PTHR11692:SF0">
    <property type="entry name" value="BIFUNCTIONAL PURINE BIOSYNTHESIS PROTEIN ATIC"/>
    <property type="match status" value="1"/>
</dbReference>
<dbReference type="PANTHER" id="PTHR11692">
    <property type="entry name" value="BIFUNCTIONAL PURINE BIOSYNTHESIS PROTEIN PURH"/>
    <property type="match status" value="1"/>
</dbReference>
<dbReference type="Pfam" id="PF01808">
    <property type="entry name" value="AICARFT_IMPCHas"/>
    <property type="match status" value="1"/>
</dbReference>
<dbReference type="Pfam" id="PF02142">
    <property type="entry name" value="MGS"/>
    <property type="match status" value="1"/>
</dbReference>
<dbReference type="PIRSF" id="PIRSF000414">
    <property type="entry name" value="AICARFT_IMPCHas"/>
    <property type="match status" value="1"/>
</dbReference>
<dbReference type="SMART" id="SM00798">
    <property type="entry name" value="AICARFT_IMPCHas"/>
    <property type="match status" value="1"/>
</dbReference>
<dbReference type="SMART" id="SM00851">
    <property type="entry name" value="MGS"/>
    <property type="match status" value="1"/>
</dbReference>
<dbReference type="SUPFAM" id="SSF53927">
    <property type="entry name" value="Cytidine deaminase-like"/>
    <property type="match status" value="1"/>
</dbReference>
<dbReference type="SUPFAM" id="SSF52335">
    <property type="entry name" value="Methylglyoxal synthase-like"/>
    <property type="match status" value="1"/>
</dbReference>
<dbReference type="PROSITE" id="PS51855">
    <property type="entry name" value="MGS"/>
    <property type="match status" value="1"/>
</dbReference>
<name>PUR9_STRP4</name>
<reference key="1">
    <citation type="journal article" date="2001" name="Microb. Drug Resist.">
        <title>Annotated draft genomic sequence from a Streptococcus pneumoniae type 19F clinical isolate.</title>
        <authorList>
            <person name="Dopazo J."/>
            <person name="Mendoza A."/>
            <person name="Herrero J."/>
            <person name="Caldara F."/>
            <person name="Humbert Y."/>
            <person name="Friedli L."/>
            <person name="Guerrier M."/>
            <person name="Grand-Schenk E."/>
            <person name="Gandin C."/>
            <person name="de Francesco M."/>
            <person name="Polissi A."/>
            <person name="Buell G."/>
            <person name="Feger G."/>
            <person name="Garcia E."/>
            <person name="Peitsch M."/>
            <person name="Garcia-Bustos J.F."/>
        </authorList>
    </citation>
    <scope>NUCLEOTIDE SEQUENCE [LARGE SCALE GENOMIC DNA]</scope>
    <source>
        <strain>G54</strain>
    </source>
</reference>
<reference key="2">
    <citation type="submission" date="2008-03" db="EMBL/GenBank/DDBJ databases">
        <title>Pneumococcal beta glucoside metabolism investigated by whole genome comparison.</title>
        <authorList>
            <person name="Mulas L."/>
            <person name="Trappetti C."/>
            <person name="Hakenbeck R."/>
            <person name="Iannelli F."/>
            <person name="Pozzi G."/>
            <person name="Davidsen T.M."/>
            <person name="Tettelin H."/>
            <person name="Oggioni M."/>
        </authorList>
    </citation>
    <scope>NUCLEOTIDE SEQUENCE [LARGE SCALE GENOMIC DNA]</scope>
    <source>
        <strain>G54</strain>
    </source>
</reference>
<gene>
    <name evidence="1" type="primary">purH</name>
    <name type="ordered locus">SPG_0056</name>
</gene>
<feature type="chain" id="PRO_1000096100" description="Bifunctional purine biosynthesis protein PurH">
    <location>
        <begin position="1"/>
        <end position="515"/>
    </location>
</feature>
<feature type="domain" description="MGS-like" evidence="2">
    <location>
        <begin position="1"/>
        <end position="145"/>
    </location>
</feature>
<protein>
    <recommendedName>
        <fullName evidence="1">Bifunctional purine biosynthesis protein PurH</fullName>
    </recommendedName>
    <domain>
        <recommendedName>
            <fullName evidence="1">Phosphoribosylaminoimidazolecarboxamide formyltransferase</fullName>
            <ecNumber evidence="1">2.1.2.3</ecNumber>
        </recommendedName>
        <alternativeName>
            <fullName evidence="1">AICAR transformylase</fullName>
        </alternativeName>
    </domain>
    <domain>
        <recommendedName>
            <fullName evidence="1">IMP cyclohydrolase</fullName>
            <ecNumber evidence="1">3.5.4.10</ecNumber>
        </recommendedName>
        <alternativeName>
            <fullName evidence="1">ATIC</fullName>
        </alternativeName>
        <alternativeName>
            <fullName evidence="1">IMP synthase</fullName>
        </alternativeName>
        <alternativeName>
            <fullName evidence="1">Inosinicase</fullName>
        </alternativeName>
    </domain>
</protein>
<organism>
    <name type="scientific">Streptococcus pneumoniae serotype 19F (strain G54)</name>
    <dbReference type="NCBI Taxonomy" id="512566"/>
    <lineage>
        <taxon>Bacteria</taxon>
        <taxon>Bacillati</taxon>
        <taxon>Bacillota</taxon>
        <taxon>Bacilli</taxon>
        <taxon>Lactobacillales</taxon>
        <taxon>Streptococcaceae</taxon>
        <taxon>Streptococcus</taxon>
    </lineage>
</organism>
<keyword id="KW-0378">Hydrolase</keyword>
<keyword id="KW-0511">Multifunctional enzyme</keyword>
<keyword id="KW-0658">Purine biosynthesis</keyword>
<keyword id="KW-0808">Transferase</keyword>
<sequence length="515" mass="56397">MTKRVLISVSDKAGIVEFAQELKKLGWEIISTGGTKVALDNAGVDTIAIDDMTGFPEMMDGRVKTLHPNIHGGLLARRDLDSHLEAAKDNKIELIDLVVVNLYPFKETILKPDVTYADAVENIDIGGPSMLRSAAKNHASVTVVVDPADYAVVLDELSANGETTYETRQRLAAKVFRHTAAYDALIAEYFTAQVGESKPEKLTLTYDLKQAMRYGENPQQDADFYQKALPTDYSIASAKQLNGKELSFNNIRDADAAIRIIRDFKDRPTVVALKHMNPCGIGQADNIETAWDYAYESDPVSIFGGIVVLNREVDAATAEKMHGVFLEIIIAPSYTDEALAILINKKKNLRILALPFNAQEASEVEAEYTGVVGGLLVQNQDVVKESPADWQVVTKRQPTETEATALEFAWKAIKYVKSNGIIVTNDHMTLGVGPGQTNRVASVRLAIDQAKDRLNGAVLASDAFFPFADNVEEIAKAGIKAIIQPGGSVRDQESIEAADKYGLTMVFTGVRHFRH</sequence>
<accession>B5E5J9</accession>